<dbReference type="EMBL" id="AE017340">
    <property type="protein sequence ID" value="AAV82816.1"/>
    <property type="molecule type" value="Genomic_DNA"/>
</dbReference>
<dbReference type="RefSeq" id="WP_011235212.1">
    <property type="nucleotide sequence ID" value="NC_006512.1"/>
</dbReference>
<dbReference type="SMR" id="Q5QY58"/>
<dbReference type="STRING" id="283942.IL1984"/>
<dbReference type="GeneID" id="41337174"/>
<dbReference type="KEGG" id="ilo:IL1984"/>
<dbReference type="eggNOG" id="COG2924">
    <property type="taxonomic scope" value="Bacteria"/>
</dbReference>
<dbReference type="HOGENOM" id="CLU_170994_0_0_6"/>
<dbReference type="OrthoDB" id="9804318at2"/>
<dbReference type="Proteomes" id="UP000001171">
    <property type="component" value="Chromosome"/>
</dbReference>
<dbReference type="GO" id="GO:0005829">
    <property type="term" value="C:cytosol"/>
    <property type="evidence" value="ECO:0007669"/>
    <property type="project" value="TreeGrafter"/>
</dbReference>
<dbReference type="GO" id="GO:0005506">
    <property type="term" value="F:iron ion binding"/>
    <property type="evidence" value="ECO:0007669"/>
    <property type="project" value="UniProtKB-UniRule"/>
</dbReference>
<dbReference type="GO" id="GO:0034599">
    <property type="term" value="P:cellular response to oxidative stress"/>
    <property type="evidence" value="ECO:0007669"/>
    <property type="project" value="TreeGrafter"/>
</dbReference>
<dbReference type="FunFam" id="1.10.3880.10:FF:000001">
    <property type="entry name" value="Probable Fe(2+)-trafficking protein"/>
    <property type="match status" value="1"/>
</dbReference>
<dbReference type="Gene3D" id="1.10.3880.10">
    <property type="entry name" value="Fe(II) trafficking protein YggX"/>
    <property type="match status" value="1"/>
</dbReference>
<dbReference type="HAMAP" id="MF_00686">
    <property type="entry name" value="Fe_traffic_YggX"/>
    <property type="match status" value="1"/>
</dbReference>
<dbReference type="InterPro" id="IPR007457">
    <property type="entry name" value="Fe_traffick_prot_YggX"/>
</dbReference>
<dbReference type="InterPro" id="IPR036766">
    <property type="entry name" value="Fe_traffick_prot_YggX_sf"/>
</dbReference>
<dbReference type="NCBIfam" id="NF003817">
    <property type="entry name" value="PRK05408.1"/>
    <property type="match status" value="1"/>
</dbReference>
<dbReference type="PANTHER" id="PTHR36965">
    <property type="entry name" value="FE(2+)-TRAFFICKING PROTEIN-RELATED"/>
    <property type="match status" value="1"/>
</dbReference>
<dbReference type="PANTHER" id="PTHR36965:SF1">
    <property type="entry name" value="FE(2+)-TRAFFICKING PROTEIN-RELATED"/>
    <property type="match status" value="1"/>
</dbReference>
<dbReference type="Pfam" id="PF04362">
    <property type="entry name" value="Iron_traffic"/>
    <property type="match status" value="1"/>
</dbReference>
<dbReference type="PIRSF" id="PIRSF029827">
    <property type="entry name" value="Fe_traffic_YggX"/>
    <property type="match status" value="1"/>
</dbReference>
<dbReference type="SUPFAM" id="SSF111148">
    <property type="entry name" value="YggX-like"/>
    <property type="match status" value="1"/>
</dbReference>
<accession>Q5QY58</accession>
<keyword id="KW-0408">Iron</keyword>
<keyword id="KW-1185">Reference proteome</keyword>
<name>FETP_IDILO</name>
<feature type="chain" id="PRO_0000214485" description="Probable Fe(2+)-trafficking protein">
    <location>
        <begin position="1"/>
        <end position="90"/>
    </location>
</feature>
<comment type="function">
    <text evidence="1">Could be a mediator in iron transactions between iron acquisition and iron-requiring processes, such as synthesis and/or repair of Fe-S clusters in biosynthetic enzymes.</text>
</comment>
<comment type="similarity">
    <text evidence="1">Belongs to the Fe(2+)-trafficking protein family.</text>
</comment>
<proteinExistence type="inferred from homology"/>
<reference key="1">
    <citation type="journal article" date="2004" name="Proc. Natl. Acad. Sci. U.S.A.">
        <title>Genome sequence of the deep-sea gamma-proteobacterium Idiomarina loihiensis reveals amino acid fermentation as a source of carbon and energy.</title>
        <authorList>
            <person name="Hou S."/>
            <person name="Saw J.H."/>
            <person name="Lee K.S."/>
            <person name="Freitas T.A."/>
            <person name="Belisle C."/>
            <person name="Kawarabayasi Y."/>
            <person name="Donachie S.P."/>
            <person name="Pikina A."/>
            <person name="Galperin M.Y."/>
            <person name="Koonin E.V."/>
            <person name="Makarova K.S."/>
            <person name="Omelchenko M.V."/>
            <person name="Sorokin A."/>
            <person name="Wolf Y.I."/>
            <person name="Li Q.X."/>
            <person name="Keum Y.S."/>
            <person name="Campbell S."/>
            <person name="Denery J."/>
            <person name="Aizawa S."/>
            <person name="Shibata S."/>
            <person name="Malahoff A."/>
            <person name="Alam M."/>
        </authorList>
    </citation>
    <scope>NUCLEOTIDE SEQUENCE [LARGE SCALE GENOMIC DNA]</scope>
    <source>
        <strain>ATCC BAA-735 / DSM 15497 / L2-TR</strain>
    </source>
</reference>
<evidence type="ECO:0000255" key="1">
    <source>
        <dbReference type="HAMAP-Rule" id="MF_00686"/>
    </source>
</evidence>
<organism>
    <name type="scientific">Idiomarina loihiensis (strain ATCC BAA-735 / DSM 15497 / L2-TR)</name>
    <dbReference type="NCBI Taxonomy" id="283942"/>
    <lineage>
        <taxon>Bacteria</taxon>
        <taxon>Pseudomonadati</taxon>
        <taxon>Pseudomonadota</taxon>
        <taxon>Gammaproteobacteria</taxon>
        <taxon>Alteromonadales</taxon>
        <taxon>Idiomarinaceae</taxon>
        <taxon>Idiomarina</taxon>
    </lineage>
</organism>
<protein>
    <recommendedName>
        <fullName evidence="1">Probable Fe(2+)-trafficking protein</fullName>
    </recommendedName>
</protein>
<sequence length="90" mass="10661">MSRTVFCEHFQKEAEGLDFQLYPGELGERIFNHISKDAWAEWQKKQTMLINEKRLNMMDPTDREFLEKQMTAFLFEGKAPEIEGYTPPES</sequence>
<gene>
    <name type="ordered locus">IL1984</name>
</gene>